<comment type="subcellular location">
    <subcellularLocation>
        <location evidence="1">Cell membrane</location>
        <topology evidence="1">Multi-pass membrane protein</topology>
    </subcellularLocation>
</comment>
<comment type="similarity">
    <text evidence="1">Belongs to the UPF0314 family.</text>
</comment>
<name>Y647_BRADU</name>
<reference key="1">
    <citation type="journal article" date="2002" name="DNA Res.">
        <title>Complete genomic sequence of nitrogen-fixing symbiotic bacterium Bradyrhizobium japonicum USDA110.</title>
        <authorList>
            <person name="Kaneko T."/>
            <person name="Nakamura Y."/>
            <person name="Sato S."/>
            <person name="Minamisawa K."/>
            <person name="Uchiumi T."/>
            <person name="Sasamoto S."/>
            <person name="Watanabe A."/>
            <person name="Idesawa K."/>
            <person name="Iriguchi M."/>
            <person name="Kawashima K."/>
            <person name="Kohara M."/>
            <person name="Matsumoto M."/>
            <person name="Shimpo S."/>
            <person name="Tsuruoka H."/>
            <person name="Wada T."/>
            <person name="Yamada M."/>
            <person name="Tabata S."/>
        </authorList>
    </citation>
    <scope>NUCLEOTIDE SEQUENCE [LARGE SCALE GENOMIC DNA]</scope>
    <source>
        <strain>JCM 10833 / BCRC 13528 / IAM 13628 / NBRC 14792 / USDA 110</strain>
    </source>
</reference>
<feature type="chain" id="PRO_0000217145" description="UPF0314 protein bll0647">
    <location>
        <begin position="1"/>
        <end position="205"/>
    </location>
</feature>
<feature type="transmembrane region" description="Helical" evidence="1">
    <location>
        <begin position="16"/>
        <end position="36"/>
    </location>
</feature>
<feature type="transmembrane region" description="Helical" evidence="1">
    <location>
        <begin position="66"/>
        <end position="86"/>
    </location>
</feature>
<feature type="transmembrane region" description="Helical" evidence="1">
    <location>
        <begin position="157"/>
        <end position="177"/>
    </location>
</feature>
<accession>Q89WN1</accession>
<dbReference type="EMBL" id="BA000040">
    <property type="protein sequence ID" value="BAC45912.1"/>
    <property type="molecule type" value="Genomic_DNA"/>
</dbReference>
<dbReference type="RefSeq" id="NP_767287.1">
    <property type="nucleotide sequence ID" value="NC_004463.1"/>
</dbReference>
<dbReference type="RefSeq" id="WP_011083474.1">
    <property type="nucleotide sequence ID" value="NC_004463.1"/>
</dbReference>
<dbReference type="STRING" id="224911.AAV28_00070"/>
<dbReference type="EnsemblBacteria" id="BAC45912">
    <property type="protein sequence ID" value="BAC45912"/>
    <property type="gene ID" value="BAC45912"/>
</dbReference>
<dbReference type="GeneID" id="46487920"/>
<dbReference type="KEGG" id="bja:bll0647"/>
<dbReference type="PATRIC" id="fig|224911.44.peg.16"/>
<dbReference type="eggNOG" id="ENOG502ZZUX">
    <property type="taxonomic scope" value="Bacteria"/>
</dbReference>
<dbReference type="HOGENOM" id="CLU_1395337_0_0_5"/>
<dbReference type="InParanoid" id="Q89WN1"/>
<dbReference type="OrthoDB" id="9811954at2"/>
<dbReference type="PhylomeDB" id="Q89WN1"/>
<dbReference type="Proteomes" id="UP000002526">
    <property type="component" value="Chromosome"/>
</dbReference>
<dbReference type="GO" id="GO:0005886">
    <property type="term" value="C:plasma membrane"/>
    <property type="evidence" value="ECO:0007669"/>
    <property type="project" value="UniProtKB-SubCell"/>
</dbReference>
<dbReference type="HAMAP" id="MF_01514">
    <property type="entry name" value="UPF0314"/>
    <property type="match status" value="1"/>
</dbReference>
<dbReference type="InterPro" id="IPR019691">
    <property type="entry name" value="DUF2585"/>
</dbReference>
<dbReference type="NCBIfam" id="NF002099">
    <property type="entry name" value="PRK00944.1"/>
    <property type="match status" value="1"/>
</dbReference>
<dbReference type="Pfam" id="PF10755">
    <property type="entry name" value="DUF2585"/>
    <property type="match status" value="1"/>
</dbReference>
<protein>
    <recommendedName>
        <fullName evidence="1">UPF0314 protein bll0647</fullName>
    </recommendedName>
</protein>
<keyword id="KW-1003">Cell membrane</keyword>
<keyword id="KW-0472">Membrane</keyword>
<keyword id="KW-1185">Reference proteome</keyword>
<keyword id="KW-0812">Transmembrane</keyword>
<keyword id="KW-1133">Transmembrane helix</keyword>
<gene>
    <name type="ordered locus">bll0647</name>
</gene>
<evidence type="ECO:0000255" key="1">
    <source>
        <dbReference type="HAMAP-Rule" id="MF_01514"/>
    </source>
</evidence>
<proteinExistence type="inferred from homology"/>
<organism>
    <name type="scientific">Bradyrhizobium diazoefficiens (strain JCM 10833 / BCRC 13528 / IAM 13628 / NBRC 14792 / USDA 110)</name>
    <dbReference type="NCBI Taxonomy" id="224911"/>
    <lineage>
        <taxon>Bacteria</taxon>
        <taxon>Pseudomonadati</taxon>
        <taxon>Pseudomonadota</taxon>
        <taxon>Alphaproteobacteria</taxon>
        <taxon>Hyphomicrobiales</taxon>
        <taxon>Nitrobacteraceae</taxon>
        <taxon>Bradyrhizobium</taxon>
    </lineage>
</organism>
<sequence length="205" mass="22788">MTLATTHESKAAVPAFAWVSIALLLLALQASILFAMGRVPICTCGYVKLWHGVVNSSENSQHIADWYSFSHVLHGFLFYGLTFLLFARLPLLPLSWPARLIVAMLIEGAWEIVENSPFIIERYRAGTISLDYFGDSIVNSVSDNLAMVLGFLAARVLPVWVTVMIGLAFEIMLALHIRDNLTLNILMLIHPIEAVKQWQSGPPII</sequence>